<proteinExistence type="inferred from homology"/>
<keyword id="KW-0175">Coiled coil</keyword>
<keyword id="KW-1185">Reference proteome</keyword>
<name>PALA_DEBHA</name>
<accession>Q6BLT2</accession>
<sequence>MNTNLLYIPYRETDIIDLGNELRNIIKMEYFQPSSNFDRDLQAVRNLRNNISNLKNEQVNNNDETVCVQYYHQLSNVIKKFPDECVEFSWYGTLGYGRSGPTRSRSLRIEQLNILYQLGSYFSQAALMESRYSDEGLKKSCSYLQAAAGCFNSMILQIQKENEKETGMIRIPRDLQPETLQFLKSLMIAQAQETIWQKSLASGMKDSVIARLSIQTSEYYSTAAKYGNSSEFIKLEWINHVTVKQFHFKAAAHYRVSILNHEGFKYGEQVASLQVALSSCDSAFRKKKYVNDFVIEDLQGLTETIKSTLRVAEKDNDLVYLKPVPKENDLAPIPGASLVKPILPPAIESFDDSSVLFKELLPYLIVQVGQAYRERQDSFIRDSFIDPIQSLNKIMYKFITERNLPASIDTIQKPENLPESIIQHSQEIISYGGTKLIEDSLNEIAKLTLESRHILEGCQERLKIEADEDDIMRERQGSQRWARPKSSEASSEFINKINKMEQYLDQAKEGDQFIISQYHEIEPYLQLYCGGYKELIQFIPNSTYVKLDTKINEIIIKLRELINEVSRIENQRKQFLTRIEIKARNNNILPSIIDSFKKKQRKLYEENAAIDERSFEDVYAKHITMFNSDLRFLEDSKHAQIALEGNIDDLNQEFESEYQHTNNESQYKRQEVLQTLENVYTKYLELISNLNEGSKFYSDFIIKSNSVLKECDEYVYHRRVEGRELEMFLNNQAVPVESVGSQQSAPDFPPQPMGGTWNPNNGIKFG</sequence>
<comment type="function">
    <text evidence="1">Required for the proteolytic cleavage of the transcription factor RIM101 in response to alkaline ambient pH. May act as a scaffold protein that recruits the calpain-like protease RIM13 via VPS32 to its substrate RIM101 (By similarity).</text>
</comment>
<comment type="subunit">
    <text evidence="1">Interacts with RIM101 by binding to its two YPX[LI] motifs.</text>
</comment>
<comment type="similarity">
    <text evidence="5">Belongs to the palA/RIM20 family.</text>
</comment>
<gene>
    <name type="primary">RIM20</name>
    <name type="ordered locus">DEHA2F10912g</name>
</gene>
<feature type="chain" id="PRO_0000218878" description="pH-response regulator protein palA/RIM20">
    <location>
        <begin position="1"/>
        <end position="766"/>
    </location>
</feature>
<feature type="domain" description="BRO1" evidence="3">
    <location>
        <begin position="4"/>
        <end position="395"/>
    </location>
</feature>
<feature type="region of interest" description="Disordered" evidence="4">
    <location>
        <begin position="740"/>
        <end position="766"/>
    </location>
</feature>
<feature type="coiled-coil region" evidence="2">
    <location>
        <begin position="544"/>
        <end position="581"/>
    </location>
</feature>
<feature type="coiled-coil region" evidence="2">
    <location>
        <begin position="633"/>
        <end position="692"/>
    </location>
</feature>
<feature type="compositionally biased region" description="Polar residues" evidence="4">
    <location>
        <begin position="757"/>
        <end position="766"/>
    </location>
</feature>
<organism>
    <name type="scientific">Debaryomyces hansenii (strain ATCC 36239 / CBS 767 / BCRC 21394 / JCM 1990 / NBRC 0083 / IGC 2968)</name>
    <name type="common">Yeast</name>
    <name type="synonym">Torulaspora hansenii</name>
    <dbReference type="NCBI Taxonomy" id="284592"/>
    <lineage>
        <taxon>Eukaryota</taxon>
        <taxon>Fungi</taxon>
        <taxon>Dikarya</taxon>
        <taxon>Ascomycota</taxon>
        <taxon>Saccharomycotina</taxon>
        <taxon>Pichiomycetes</taxon>
        <taxon>Debaryomycetaceae</taxon>
        <taxon>Debaryomyces</taxon>
    </lineage>
</organism>
<evidence type="ECO:0000250" key="1"/>
<evidence type="ECO:0000255" key="2"/>
<evidence type="ECO:0000255" key="3">
    <source>
        <dbReference type="PROSITE-ProRule" id="PRU00526"/>
    </source>
</evidence>
<evidence type="ECO:0000256" key="4">
    <source>
        <dbReference type="SAM" id="MobiDB-lite"/>
    </source>
</evidence>
<evidence type="ECO:0000305" key="5"/>
<protein>
    <recommendedName>
        <fullName>pH-response regulator protein palA/RIM20</fullName>
    </recommendedName>
</protein>
<dbReference type="EMBL" id="CR382138">
    <property type="protein sequence ID" value="CAG89184.2"/>
    <property type="molecule type" value="Genomic_DNA"/>
</dbReference>
<dbReference type="RefSeq" id="XP_460839.2">
    <property type="nucleotide sequence ID" value="XM_460839.1"/>
</dbReference>
<dbReference type="SMR" id="Q6BLT2"/>
<dbReference type="FunCoup" id="Q6BLT2">
    <property type="interactions" value="1223"/>
</dbReference>
<dbReference type="STRING" id="284592.Q6BLT2"/>
<dbReference type="GeneID" id="2903574"/>
<dbReference type="KEGG" id="dha:DEHA2F10912g"/>
<dbReference type="VEuPathDB" id="FungiDB:DEHA2F10912g"/>
<dbReference type="eggNOG" id="KOG2220">
    <property type="taxonomic scope" value="Eukaryota"/>
</dbReference>
<dbReference type="HOGENOM" id="CLU_007181_0_0_1"/>
<dbReference type="InParanoid" id="Q6BLT2"/>
<dbReference type="OMA" id="VSHAEEM"/>
<dbReference type="OrthoDB" id="64867at2759"/>
<dbReference type="Proteomes" id="UP000000599">
    <property type="component" value="Chromosome F"/>
</dbReference>
<dbReference type="GO" id="GO:0005768">
    <property type="term" value="C:endosome"/>
    <property type="evidence" value="ECO:0007669"/>
    <property type="project" value="TreeGrafter"/>
</dbReference>
<dbReference type="CDD" id="cd09241">
    <property type="entry name" value="BRO1_ScRim20-like"/>
    <property type="match status" value="1"/>
</dbReference>
<dbReference type="CDD" id="cd08915">
    <property type="entry name" value="V_Alix_like"/>
    <property type="match status" value="1"/>
</dbReference>
<dbReference type="Gene3D" id="1.20.120.560">
    <property type="entry name" value="alix/aip1 in complex with the ypdl late domain"/>
    <property type="match status" value="1"/>
</dbReference>
<dbReference type="Gene3D" id="1.20.140.50">
    <property type="entry name" value="alix/aip1 like domains"/>
    <property type="match status" value="1"/>
</dbReference>
<dbReference type="Gene3D" id="1.25.40.280">
    <property type="entry name" value="alix/aip1 like domains"/>
    <property type="match status" value="1"/>
</dbReference>
<dbReference type="InterPro" id="IPR025304">
    <property type="entry name" value="ALIX_V_dom"/>
</dbReference>
<dbReference type="InterPro" id="IPR004328">
    <property type="entry name" value="BRO1_dom"/>
</dbReference>
<dbReference type="InterPro" id="IPR038499">
    <property type="entry name" value="BRO1_sf"/>
</dbReference>
<dbReference type="PANTHER" id="PTHR23030">
    <property type="entry name" value="PCD6 INTERACTING PROTEIN-RELATED"/>
    <property type="match status" value="1"/>
</dbReference>
<dbReference type="PANTHER" id="PTHR23030:SF39">
    <property type="entry name" value="PROGRAMMED CELL DEATH 6-INTERACTING PROTEIN"/>
    <property type="match status" value="1"/>
</dbReference>
<dbReference type="Pfam" id="PF13949">
    <property type="entry name" value="ALIX_LYPXL_bnd"/>
    <property type="match status" value="1"/>
</dbReference>
<dbReference type="Pfam" id="PF03097">
    <property type="entry name" value="BRO1"/>
    <property type="match status" value="1"/>
</dbReference>
<dbReference type="SMART" id="SM01041">
    <property type="entry name" value="BRO1"/>
    <property type="match status" value="1"/>
</dbReference>
<dbReference type="PROSITE" id="PS51180">
    <property type="entry name" value="BRO1"/>
    <property type="match status" value="1"/>
</dbReference>
<reference key="1">
    <citation type="journal article" date="2004" name="Nature">
        <title>Genome evolution in yeasts.</title>
        <authorList>
            <person name="Dujon B."/>
            <person name="Sherman D."/>
            <person name="Fischer G."/>
            <person name="Durrens P."/>
            <person name="Casaregola S."/>
            <person name="Lafontaine I."/>
            <person name="de Montigny J."/>
            <person name="Marck C."/>
            <person name="Neuveglise C."/>
            <person name="Talla E."/>
            <person name="Goffard N."/>
            <person name="Frangeul L."/>
            <person name="Aigle M."/>
            <person name="Anthouard V."/>
            <person name="Babour A."/>
            <person name="Barbe V."/>
            <person name="Barnay S."/>
            <person name="Blanchin S."/>
            <person name="Beckerich J.-M."/>
            <person name="Beyne E."/>
            <person name="Bleykasten C."/>
            <person name="Boisrame A."/>
            <person name="Boyer J."/>
            <person name="Cattolico L."/>
            <person name="Confanioleri F."/>
            <person name="de Daruvar A."/>
            <person name="Despons L."/>
            <person name="Fabre E."/>
            <person name="Fairhead C."/>
            <person name="Ferry-Dumazet H."/>
            <person name="Groppi A."/>
            <person name="Hantraye F."/>
            <person name="Hennequin C."/>
            <person name="Jauniaux N."/>
            <person name="Joyet P."/>
            <person name="Kachouri R."/>
            <person name="Kerrest A."/>
            <person name="Koszul R."/>
            <person name="Lemaire M."/>
            <person name="Lesur I."/>
            <person name="Ma L."/>
            <person name="Muller H."/>
            <person name="Nicaud J.-M."/>
            <person name="Nikolski M."/>
            <person name="Oztas S."/>
            <person name="Ozier-Kalogeropoulos O."/>
            <person name="Pellenz S."/>
            <person name="Potier S."/>
            <person name="Richard G.-F."/>
            <person name="Straub M.-L."/>
            <person name="Suleau A."/>
            <person name="Swennen D."/>
            <person name="Tekaia F."/>
            <person name="Wesolowski-Louvel M."/>
            <person name="Westhof E."/>
            <person name="Wirth B."/>
            <person name="Zeniou-Meyer M."/>
            <person name="Zivanovic Y."/>
            <person name="Bolotin-Fukuhara M."/>
            <person name="Thierry A."/>
            <person name="Bouchier C."/>
            <person name="Caudron B."/>
            <person name="Scarpelli C."/>
            <person name="Gaillardin C."/>
            <person name="Weissenbach J."/>
            <person name="Wincker P."/>
            <person name="Souciet J.-L."/>
        </authorList>
    </citation>
    <scope>NUCLEOTIDE SEQUENCE [LARGE SCALE GENOMIC DNA]</scope>
    <source>
        <strain>ATCC 36239 / CBS 767 / BCRC 21394 / JCM 1990 / NBRC 0083 / IGC 2968</strain>
    </source>
</reference>